<name>SYC_YEAST</name>
<accession>P53852</accession>
<accession>D6W0U6</accession>
<reference key="1">
    <citation type="journal article" date="1997" name="Yeast">
        <title>Sequence analysis of the 33 kb long region between ORC5 and SUI1 from the left arm of chromosome XIV from Saccharomyces cerevisiae.</title>
        <authorList>
            <person name="Sen-Gupta M."/>
            <person name="Gueldener U."/>
            <person name="Beinhauer J.D."/>
            <person name="Fiedler T.A."/>
            <person name="Hegemann J.H."/>
        </authorList>
    </citation>
    <scope>NUCLEOTIDE SEQUENCE [GENOMIC DNA]</scope>
    <source>
        <strain>ATCC 96604 / S288c / FY1679</strain>
    </source>
</reference>
<reference key="2">
    <citation type="journal article" date="1997" name="Nature">
        <title>The nucleotide sequence of Saccharomyces cerevisiae chromosome XIV and its evolutionary implications.</title>
        <authorList>
            <person name="Philippsen P."/>
            <person name="Kleine K."/>
            <person name="Poehlmann R."/>
            <person name="Duesterhoeft A."/>
            <person name="Hamberg K."/>
            <person name="Hegemann J.H."/>
            <person name="Obermaier B."/>
            <person name="Urrestarazu L.A."/>
            <person name="Aert R."/>
            <person name="Albermann K."/>
            <person name="Altmann R."/>
            <person name="Andre B."/>
            <person name="Baladron V."/>
            <person name="Ballesta J.P.G."/>
            <person name="Becam A.-M."/>
            <person name="Beinhauer J.D."/>
            <person name="Boskovic J."/>
            <person name="Buitrago M.J."/>
            <person name="Bussereau F."/>
            <person name="Coster F."/>
            <person name="Crouzet M."/>
            <person name="D'Angelo M."/>
            <person name="Dal Pero F."/>
            <person name="De Antoni A."/>
            <person name="del Rey F."/>
            <person name="Doignon F."/>
            <person name="Domdey H."/>
            <person name="Dubois E."/>
            <person name="Fiedler T.A."/>
            <person name="Fleig U."/>
            <person name="Floeth M."/>
            <person name="Fritz C."/>
            <person name="Gaillardin C."/>
            <person name="Garcia-Cantalejo J.M."/>
            <person name="Glansdorff N."/>
            <person name="Goffeau A."/>
            <person name="Gueldener U."/>
            <person name="Herbert C.J."/>
            <person name="Heumann K."/>
            <person name="Heuss-Neitzel D."/>
            <person name="Hilbert H."/>
            <person name="Hinni K."/>
            <person name="Iraqui Houssaini I."/>
            <person name="Jacquet M."/>
            <person name="Jimenez A."/>
            <person name="Jonniaux J.-L."/>
            <person name="Karpfinger-Hartl L."/>
            <person name="Lanfranchi G."/>
            <person name="Lepingle A."/>
            <person name="Levesque H."/>
            <person name="Lyck R."/>
            <person name="Maftahi M."/>
            <person name="Mallet L."/>
            <person name="Maurer C.T.C."/>
            <person name="Messenguy F."/>
            <person name="Mewes H.-W."/>
            <person name="Moestl D."/>
            <person name="Nasr F."/>
            <person name="Nicaud J.-M."/>
            <person name="Niedenthal R.K."/>
            <person name="Pandolfo D."/>
            <person name="Pierard A."/>
            <person name="Piravandi E."/>
            <person name="Planta R.J."/>
            <person name="Pohl T.M."/>
            <person name="Purnelle B."/>
            <person name="Rebischung C."/>
            <person name="Remacha M.A."/>
            <person name="Revuelta J.L."/>
            <person name="Rinke M."/>
            <person name="Saiz J.E."/>
            <person name="Sartorello F."/>
            <person name="Scherens B."/>
            <person name="Sen-Gupta M."/>
            <person name="Soler-Mira A."/>
            <person name="Urbanus J.H.M."/>
            <person name="Valle G."/>
            <person name="Van Dyck L."/>
            <person name="Verhasselt P."/>
            <person name="Vierendeels F."/>
            <person name="Vissers S."/>
            <person name="Voet M."/>
            <person name="Volckaert G."/>
            <person name="Wach A."/>
            <person name="Wambutt R."/>
            <person name="Wedler H."/>
            <person name="Zollner A."/>
            <person name="Hani J."/>
        </authorList>
    </citation>
    <scope>NUCLEOTIDE SEQUENCE [LARGE SCALE GENOMIC DNA]</scope>
    <source>
        <strain>ATCC 204508 / S288c</strain>
    </source>
</reference>
<reference key="3">
    <citation type="journal article" date="2014" name="G3 (Bethesda)">
        <title>The reference genome sequence of Saccharomyces cerevisiae: Then and now.</title>
        <authorList>
            <person name="Engel S.R."/>
            <person name="Dietrich F.S."/>
            <person name="Fisk D.G."/>
            <person name="Binkley G."/>
            <person name="Balakrishnan R."/>
            <person name="Costanzo M.C."/>
            <person name="Dwight S.S."/>
            <person name="Hitz B.C."/>
            <person name="Karra K."/>
            <person name="Nash R.S."/>
            <person name="Weng S."/>
            <person name="Wong E.D."/>
            <person name="Lloyd P."/>
            <person name="Skrzypek M.S."/>
            <person name="Miyasato S.R."/>
            <person name="Simison M."/>
            <person name="Cherry J.M."/>
        </authorList>
    </citation>
    <scope>GENOME REANNOTATION</scope>
    <source>
        <strain>ATCC 204508 / S288c</strain>
    </source>
</reference>
<reference key="4">
    <citation type="journal article" date="1997" name="Biochimie">
        <title>Cysteinyl-tRNA synthetase from Saccharomyces cerevisiae. Purification, characterization and assignment to the genomic sequence YNL247w.</title>
        <authorList>
            <person name="Motorin Y."/>
            <person name="Le Caer J.-P."/>
            <person name="Waller J.-P."/>
        </authorList>
    </citation>
    <scope>PROTEIN SEQUENCE OF 137-164; 247-269 AND 407-416</scope>
    <scope>FUNCTION</scope>
    <scope>SUBUNIT</scope>
    <scope>CATALYTIC ACTIVITY</scope>
</reference>
<reference key="5">
    <citation type="journal article" date="2003" name="Nature">
        <title>Global analysis of protein expression in yeast.</title>
        <authorList>
            <person name="Ghaemmaghami S."/>
            <person name="Huh W.-K."/>
            <person name="Bower K."/>
            <person name="Howson R.W."/>
            <person name="Belle A."/>
            <person name="Dephoure N."/>
            <person name="O'Shea E.K."/>
            <person name="Weissman J.S."/>
        </authorList>
    </citation>
    <scope>LEVEL OF PROTEIN EXPRESSION [LARGE SCALE ANALYSIS]</scope>
</reference>
<reference key="6">
    <citation type="journal article" date="2007" name="J. Proteome Res.">
        <title>Large-scale phosphorylation analysis of alpha-factor-arrested Saccharomyces cerevisiae.</title>
        <authorList>
            <person name="Li X."/>
            <person name="Gerber S.A."/>
            <person name="Rudner A.D."/>
            <person name="Beausoleil S.A."/>
            <person name="Haas W."/>
            <person name="Villen J."/>
            <person name="Elias J.E."/>
            <person name="Gygi S.P."/>
        </authorList>
    </citation>
    <scope>PHOSPHORYLATION [LARGE SCALE ANALYSIS] AT SER-326</scope>
    <scope>IDENTIFICATION BY MASS SPECTROMETRY [LARGE SCALE ANALYSIS]</scope>
    <source>
        <strain>ADR376</strain>
    </source>
</reference>
<reference key="7">
    <citation type="journal article" date="2008" name="Mol. Cell. Proteomics">
        <title>A multidimensional chromatography technology for in-depth phosphoproteome analysis.</title>
        <authorList>
            <person name="Albuquerque C.P."/>
            <person name="Smolka M.B."/>
            <person name="Payne S.H."/>
            <person name="Bafna V."/>
            <person name="Eng J."/>
            <person name="Zhou H."/>
        </authorList>
    </citation>
    <scope>PHOSPHORYLATION [LARGE SCALE ANALYSIS] AT SER-326</scope>
    <scope>IDENTIFICATION BY MASS SPECTROMETRY [LARGE SCALE ANALYSIS]</scope>
</reference>
<reference key="8">
    <citation type="journal article" date="2009" name="Science">
        <title>Global analysis of Cdk1 substrate phosphorylation sites provides insights into evolution.</title>
        <authorList>
            <person name="Holt L.J."/>
            <person name="Tuch B.B."/>
            <person name="Villen J."/>
            <person name="Johnson A.D."/>
            <person name="Gygi S.P."/>
            <person name="Morgan D.O."/>
        </authorList>
    </citation>
    <scope>IDENTIFICATION BY MASS SPECTROMETRY [LARGE SCALE ANALYSIS]</scope>
</reference>
<comment type="catalytic activity">
    <reaction evidence="4">
        <text>tRNA(Cys) + L-cysteine + ATP = L-cysteinyl-tRNA(Cys) + AMP + diphosphate</text>
        <dbReference type="Rhea" id="RHEA:17773"/>
        <dbReference type="Rhea" id="RHEA-COMP:9661"/>
        <dbReference type="Rhea" id="RHEA-COMP:9679"/>
        <dbReference type="ChEBI" id="CHEBI:30616"/>
        <dbReference type="ChEBI" id="CHEBI:33019"/>
        <dbReference type="ChEBI" id="CHEBI:35235"/>
        <dbReference type="ChEBI" id="CHEBI:78442"/>
        <dbReference type="ChEBI" id="CHEBI:78517"/>
        <dbReference type="ChEBI" id="CHEBI:456215"/>
        <dbReference type="EC" id="6.1.1.16"/>
    </reaction>
    <physiologicalReaction direction="left-to-right" evidence="6">
        <dbReference type="Rhea" id="RHEA:17774"/>
    </physiologicalReaction>
</comment>
<comment type="cofactor">
    <cofactor evidence="1">
        <name>Zn(2+)</name>
        <dbReference type="ChEBI" id="CHEBI:29105"/>
    </cofactor>
    <text evidence="1">Binds 1 zinc ion per subunit.</text>
</comment>
<comment type="subunit">
    <text evidence="4">Homodimer.</text>
</comment>
<comment type="PTM">
    <text>The N-terminus is blocked.</text>
</comment>
<comment type="miscellaneous">
    <text evidence="3">Present with 23000 molecules/cell in log phase SD medium.</text>
</comment>
<comment type="similarity">
    <text evidence="5">Belongs to the class-I aminoacyl-tRNA synthetase family.</text>
</comment>
<feature type="chain" id="PRO_0000159553" description="Cysteine--tRNA ligase">
    <location>
        <begin position="1"/>
        <end position="767"/>
    </location>
</feature>
<feature type="region of interest" description="Disordered" evidence="2">
    <location>
        <begin position="683"/>
        <end position="712"/>
    </location>
</feature>
<feature type="short sequence motif" description="'HIGH' region">
    <location>
        <begin position="65"/>
        <end position="75"/>
    </location>
</feature>
<feature type="short sequence motif" description="'KMSKS' region">
    <location>
        <begin position="427"/>
        <end position="431"/>
    </location>
</feature>
<feature type="compositionally biased region" description="Basic and acidic residues" evidence="2">
    <location>
        <begin position="683"/>
        <end position="706"/>
    </location>
</feature>
<feature type="binding site" evidence="1">
    <location>
        <position position="63"/>
    </location>
    <ligand>
        <name>Zn(2+)</name>
        <dbReference type="ChEBI" id="CHEBI:29105"/>
    </ligand>
</feature>
<feature type="binding site" evidence="1">
    <location>
        <position position="369"/>
    </location>
    <ligand>
        <name>Zn(2+)</name>
        <dbReference type="ChEBI" id="CHEBI:29105"/>
    </ligand>
</feature>
<feature type="binding site" evidence="1">
    <location>
        <position position="394"/>
    </location>
    <ligand>
        <name>Zn(2+)</name>
        <dbReference type="ChEBI" id="CHEBI:29105"/>
    </ligand>
</feature>
<feature type="binding site" evidence="1">
    <location>
        <position position="398"/>
    </location>
    <ligand>
        <name>Zn(2+)</name>
        <dbReference type="ChEBI" id="CHEBI:29105"/>
    </ligand>
</feature>
<feature type="binding site" evidence="1">
    <location>
        <position position="430"/>
    </location>
    <ligand>
        <name>ATP</name>
        <dbReference type="ChEBI" id="CHEBI:30616"/>
    </ligand>
</feature>
<feature type="modified residue" description="Phosphoserine" evidence="7 8">
    <location>
        <position position="326"/>
    </location>
</feature>
<organism>
    <name type="scientific">Saccharomyces cerevisiae (strain ATCC 204508 / S288c)</name>
    <name type="common">Baker's yeast</name>
    <dbReference type="NCBI Taxonomy" id="559292"/>
    <lineage>
        <taxon>Eukaryota</taxon>
        <taxon>Fungi</taxon>
        <taxon>Dikarya</taxon>
        <taxon>Ascomycota</taxon>
        <taxon>Saccharomycotina</taxon>
        <taxon>Saccharomycetes</taxon>
        <taxon>Saccharomycetales</taxon>
        <taxon>Saccharomycetaceae</taxon>
        <taxon>Saccharomyces</taxon>
    </lineage>
</organism>
<evidence type="ECO:0000250" key="1"/>
<evidence type="ECO:0000256" key="2">
    <source>
        <dbReference type="SAM" id="MobiDB-lite"/>
    </source>
</evidence>
<evidence type="ECO:0000269" key="3">
    <source>
    </source>
</evidence>
<evidence type="ECO:0000269" key="4">
    <source>
    </source>
</evidence>
<evidence type="ECO:0000305" key="5"/>
<evidence type="ECO:0000305" key="6">
    <source>
    </source>
</evidence>
<evidence type="ECO:0007744" key="7">
    <source>
    </source>
</evidence>
<evidence type="ECO:0007744" key="8">
    <source>
    </source>
</evidence>
<protein>
    <recommendedName>
        <fullName>Cysteine--tRNA ligase</fullName>
        <ecNumber evidence="4">6.1.1.16</ecNumber>
    </recommendedName>
    <alternativeName>
        <fullName>Cysteinyl-tRNA synthetase</fullName>
        <shortName>CysRS</shortName>
    </alternativeName>
</protein>
<gene>
    <name type="ordered locus">YNL247W</name>
    <name type="ORF">N0885</name>
</gene>
<dbReference type="EC" id="6.1.1.16" evidence="4"/>
<dbReference type="EMBL" id="X96722">
    <property type="protein sequence ID" value="CAA65497.1"/>
    <property type="molecule type" value="Genomic_DNA"/>
</dbReference>
<dbReference type="EMBL" id="Z71523">
    <property type="protein sequence ID" value="CAA96154.1"/>
    <property type="molecule type" value="Genomic_DNA"/>
</dbReference>
<dbReference type="EMBL" id="BK006947">
    <property type="protein sequence ID" value="DAA10312.1"/>
    <property type="molecule type" value="Genomic_DNA"/>
</dbReference>
<dbReference type="PIR" id="S63220">
    <property type="entry name" value="S63220"/>
</dbReference>
<dbReference type="SMR" id="P53852"/>
<dbReference type="BioGRID" id="35592">
    <property type="interactions" value="80"/>
</dbReference>
<dbReference type="FunCoup" id="P53852">
    <property type="interactions" value="1106"/>
</dbReference>
<dbReference type="IntAct" id="P53852">
    <property type="interactions" value="14"/>
</dbReference>
<dbReference type="MINT" id="P53852"/>
<dbReference type="STRING" id="4932.YNL247W"/>
<dbReference type="iPTMnet" id="P53852"/>
<dbReference type="PaxDb" id="4932-YNL247W"/>
<dbReference type="PeptideAtlas" id="P53852"/>
<dbReference type="EnsemblFungi" id="YNL247W_mRNA">
    <property type="protein sequence ID" value="YNL247W"/>
    <property type="gene ID" value="YNL247W"/>
</dbReference>
<dbReference type="KEGG" id="sce:YNL247W"/>
<dbReference type="AGR" id="SGD:S000005191"/>
<dbReference type="SGD" id="S000005191">
    <property type="gene designation" value="YNL247W"/>
</dbReference>
<dbReference type="VEuPathDB" id="FungiDB:YNL247W"/>
<dbReference type="eggNOG" id="KOG2007">
    <property type="taxonomic scope" value="Eukaryota"/>
</dbReference>
<dbReference type="GeneTree" id="ENSGT00390000006347"/>
<dbReference type="HOGENOM" id="CLU_013528_3_1_1"/>
<dbReference type="InParanoid" id="P53852"/>
<dbReference type="OMA" id="FHNDMKS"/>
<dbReference type="OrthoDB" id="438179at2759"/>
<dbReference type="BioCyc" id="YEAST:G3O-33244-MONOMER"/>
<dbReference type="BioGRID-ORCS" id="855474">
    <property type="hits" value="0 hits in 10 CRISPR screens"/>
</dbReference>
<dbReference type="PRO" id="PR:P53852"/>
<dbReference type="Proteomes" id="UP000002311">
    <property type="component" value="Chromosome XIV"/>
</dbReference>
<dbReference type="RNAct" id="P53852">
    <property type="molecule type" value="protein"/>
</dbReference>
<dbReference type="GO" id="GO:0005737">
    <property type="term" value="C:cytoplasm"/>
    <property type="evidence" value="ECO:0007005"/>
    <property type="project" value="SGD"/>
</dbReference>
<dbReference type="GO" id="GO:0005829">
    <property type="term" value="C:cytosol"/>
    <property type="evidence" value="ECO:0000314"/>
    <property type="project" value="SGD"/>
</dbReference>
<dbReference type="GO" id="GO:0005739">
    <property type="term" value="C:mitochondrion"/>
    <property type="evidence" value="ECO:0000314"/>
    <property type="project" value="SGD"/>
</dbReference>
<dbReference type="GO" id="GO:0005524">
    <property type="term" value="F:ATP binding"/>
    <property type="evidence" value="ECO:0000318"/>
    <property type="project" value="GO_Central"/>
</dbReference>
<dbReference type="GO" id="GO:0004817">
    <property type="term" value="F:cysteine-tRNA ligase activity"/>
    <property type="evidence" value="ECO:0000314"/>
    <property type="project" value="SGD"/>
</dbReference>
<dbReference type="GO" id="GO:0046872">
    <property type="term" value="F:metal ion binding"/>
    <property type="evidence" value="ECO:0007669"/>
    <property type="project" value="UniProtKB-KW"/>
</dbReference>
<dbReference type="GO" id="GO:1990825">
    <property type="term" value="F:sequence-specific mRNA binding"/>
    <property type="evidence" value="ECO:0000314"/>
    <property type="project" value="SGD"/>
</dbReference>
<dbReference type="GO" id="GO:0006423">
    <property type="term" value="P:cysteinyl-tRNA aminoacylation"/>
    <property type="evidence" value="ECO:0000314"/>
    <property type="project" value="SGD"/>
</dbReference>
<dbReference type="CDD" id="cd00672">
    <property type="entry name" value="CysRS_core"/>
    <property type="match status" value="1"/>
</dbReference>
<dbReference type="Gene3D" id="1.20.120.1910">
    <property type="entry name" value="Cysteine-tRNA ligase, C-terminal anti-codon recognition domain"/>
    <property type="match status" value="1"/>
</dbReference>
<dbReference type="Gene3D" id="3.40.50.620">
    <property type="entry name" value="HUPs"/>
    <property type="match status" value="1"/>
</dbReference>
<dbReference type="HAMAP" id="MF_00041">
    <property type="entry name" value="Cys_tRNA_synth"/>
    <property type="match status" value="1"/>
</dbReference>
<dbReference type="InterPro" id="IPR015803">
    <property type="entry name" value="Cys-tRNA-ligase"/>
</dbReference>
<dbReference type="InterPro" id="IPR024909">
    <property type="entry name" value="Cys-tRNA/MSH_ligase"/>
</dbReference>
<dbReference type="InterPro" id="IPR014729">
    <property type="entry name" value="Rossmann-like_a/b/a_fold"/>
</dbReference>
<dbReference type="InterPro" id="IPR032678">
    <property type="entry name" value="tRNA-synt_1_cat_dom"/>
</dbReference>
<dbReference type="InterPro" id="IPR009080">
    <property type="entry name" value="tRNAsynth_Ia_anticodon-bd"/>
</dbReference>
<dbReference type="NCBIfam" id="TIGR00435">
    <property type="entry name" value="cysS"/>
    <property type="match status" value="1"/>
</dbReference>
<dbReference type="PANTHER" id="PTHR10890:SF3">
    <property type="entry name" value="CYSTEINE--TRNA LIGASE, CYTOPLASMIC"/>
    <property type="match status" value="1"/>
</dbReference>
<dbReference type="PANTHER" id="PTHR10890">
    <property type="entry name" value="CYSTEINYL-TRNA SYNTHETASE"/>
    <property type="match status" value="1"/>
</dbReference>
<dbReference type="Pfam" id="PF01406">
    <property type="entry name" value="tRNA-synt_1e"/>
    <property type="match status" value="1"/>
</dbReference>
<dbReference type="PRINTS" id="PR00983">
    <property type="entry name" value="TRNASYNTHCYS"/>
</dbReference>
<dbReference type="SUPFAM" id="SSF47323">
    <property type="entry name" value="Anticodon-binding domain of a subclass of class I aminoacyl-tRNA synthetases"/>
    <property type="match status" value="1"/>
</dbReference>
<dbReference type="SUPFAM" id="SSF52374">
    <property type="entry name" value="Nucleotidylyl transferase"/>
    <property type="match status" value="1"/>
</dbReference>
<sequence length="767" mass="87530">MNIFIKALRRYTIMSTPKIVQPKWKVPTPQAKETVLKLYNSLTRSKVEFIPQSGNRGVTWYSCGPTVYDASHMGHARNYVSIDINRRIIQDYFGYDVQFVQNVTDIDDKIILRARQNYLFDNFVKENDTKFNATVVDKVKTALFQYINKNFTIQGSEIKTIEEFETWLSNADTETLKLENPKFPMHVTAVQNAIESITKGDSMDAEVAFEKVKDVTVPLLDKELGSTISNPEIFRQLPAYWEQKFNDDMLSLNVLPPTVTTRVSEYVPEIIDFVQKIIDNGYAYATSDGSVYFDTLKFDKSPNHDYAKCQPWNKGQLDLINDGEGSLSNFADNGKKSNNDFALWKASKAGEPEWESPWGKGRPGWHIECSVMASDILGSNIDIHSGGIDLAFPHHDNELAQSEARFDNQQWINYFLHTGHLHIEGQKMSKSLKNFITIQEALKKFSPRQLRLAFASVQWNNQLDFKESLIHEVKSFENSMNNFFKTIRALKNDAASAGHISKKFSPLEKELLADFVESESKVHSAFCDNLSTPVALKTLSELVTKSNTYITTAGAALKIEPLIAICSYITKILRIIGFPSRPDNLGWAAQAGSNDGSLGSLEDTVMPYVKCLSTFRDDVRSLAIKKAEPKEFLQLTDKIRNEDLLNLNVALDDRNGQSALIKFLTNDEKLEIVKLNEEKHANELAKKQKKLEQQKLREQKENERKQKAQIKPQDMFKDVTLYSAWDEQGLPTKDKDGNDITKSMTKKLKKQWEQQKKLHEEYFGEDK</sequence>
<keyword id="KW-0030">Aminoacyl-tRNA synthetase</keyword>
<keyword id="KW-0067">ATP-binding</keyword>
<keyword id="KW-0903">Direct protein sequencing</keyword>
<keyword id="KW-0436">Ligase</keyword>
<keyword id="KW-0479">Metal-binding</keyword>
<keyword id="KW-0547">Nucleotide-binding</keyword>
<keyword id="KW-0597">Phosphoprotein</keyword>
<keyword id="KW-0648">Protein biosynthesis</keyword>
<keyword id="KW-1185">Reference proteome</keyword>
<keyword id="KW-0862">Zinc</keyword>
<proteinExistence type="evidence at protein level"/>